<keyword id="KW-0456">Lyase</keyword>
<keyword id="KW-0460">Magnesium</keyword>
<keyword id="KW-0479">Metal-binding</keyword>
<dbReference type="EC" id="4.2.3.58" evidence="3"/>
<dbReference type="EMBL" id="HQ426158">
    <property type="protein sequence ID" value="ADZ45515.1"/>
    <property type="molecule type" value="mRNA"/>
</dbReference>
<dbReference type="SMR" id="F2XFA0"/>
<dbReference type="UniPathway" id="UPA00924"/>
<dbReference type="GO" id="GO:0016829">
    <property type="term" value="F:lyase activity"/>
    <property type="evidence" value="ECO:0000314"/>
    <property type="project" value="UniProtKB"/>
</dbReference>
<dbReference type="GO" id="GO:0000287">
    <property type="term" value="F:magnesium ion binding"/>
    <property type="evidence" value="ECO:0007669"/>
    <property type="project" value="InterPro"/>
</dbReference>
<dbReference type="GO" id="GO:0010333">
    <property type="term" value="F:terpene synthase activity"/>
    <property type="evidence" value="ECO:0007669"/>
    <property type="project" value="InterPro"/>
</dbReference>
<dbReference type="GO" id="GO:0016102">
    <property type="term" value="P:diterpenoid biosynthetic process"/>
    <property type="evidence" value="ECO:0007669"/>
    <property type="project" value="InterPro"/>
</dbReference>
<dbReference type="GO" id="GO:0010597">
    <property type="term" value="P:green leaf volatile biosynthetic process"/>
    <property type="evidence" value="ECO:0000314"/>
    <property type="project" value="UniProtKB"/>
</dbReference>
<dbReference type="GO" id="GO:0016106">
    <property type="term" value="P:sesquiterpenoid biosynthetic process"/>
    <property type="evidence" value="ECO:0000314"/>
    <property type="project" value="UniProtKB"/>
</dbReference>
<dbReference type="CDD" id="cd00684">
    <property type="entry name" value="Terpene_cyclase_plant_C1"/>
    <property type="match status" value="1"/>
</dbReference>
<dbReference type="FunFam" id="1.50.10.130:FF:000002">
    <property type="entry name" value="Ent-copalyl diphosphate synthase, chloroplastic"/>
    <property type="match status" value="1"/>
</dbReference>
<dbReference type="FunFam" id="1.10.600.10:FF:000005">
    <property type="entry name" value="Ent-kaur-16-ene synthase, chloroplastic"/>
    <property type="match status" value="1"/>
</dbReference>
<dbReference type="Gene3D" id="1.10.600.10">
    <property type="entry name" value="Farnesyl Diphosphate Synthase"/>
    <property type="match status" value="1"/>
</dbReference>
<dbReference type="Gene3D" id="1.50.10.130">
    <property type="entry name" value="Terpene synthase, N-terminal domain"/>
    <property type="match status" value="1"/>
</dbReference>
<dbReference type="InterPro" id="IPR008949">
    <property type="entry name" value="Isoprenoid_synthase_dom_sf"/>
</dbReference>
<dbReference type="InterPro" id="IPR034741">
    <property type="entry name" value="Terpene_cyclase-like_1_C"/>
</dbReference>
<dbReference type="InterPro" id="IPR044814">
    <property type="entry name" value="Terpene_cyclase_plant_C1"/>
</dbReference>
<dbReference type="InterPro" id="IPR001906">
    <property type="entry name" value="Terpene_synth_N"/>
</dbReference>
<dbReference type="InterPro" id="IPR036965">
    <property type="entry name" value="Terpene_synth_N_sf"/>
</dbReference>
<dbReference type="InterPro" id="IPR050148">
    <property type="entry name" value="Terpene_synthase-like"/>
</dbReference>
<dbReference type="InterPro" id="IPR005630">
    <property type="entry name" value="Terpene_synthase_metal-bd"/>
</dbReference>
<dbReference type="InterPro" id="IPR008930">
    <property type="entry name" value="Terpenoid_cyclase/PrenylTrfase"/>
</dbReference>
<dbReference type="PANTHER" id="PTHR31225">
    <property type="entry name" value="OS04G0344100 PROTEIN-RELATED"/>
    <property type="match status" value="1"/>
</dbReference>
<dbReference type="Pfam" id="PF01397">
    <property type="entry name" value="Terpene_synth"/>
    <property type="match status" value="1"/>
</dbReference>
<dbReference type="Pfam" id="PF03936">
    <property type="entry name" value="Terpene_synth_C"/>
    <property type="match status" value="1"/>
</dbReference>
<dbReference type="SFLD" id="SFLDS00005">
    <property type="entry name" value="Isoprenoid_Synthase_Type_I"/>
    <property type="match status" value="1"/>
</dbReference>
<dbReference type="SFLD" id="SFLDG01019">
    <property type="entry name" value="Terpene_Cyclase_Like_1_C_Termi"/>
    <property type="match status" value="1"/>
</dbReference>
<dbReference type="SFLD" id="SFLDG01014">
    <property type="entry name" value="Terpene_Cyclase_Like_1_N-term"/>
    <property type="match status" value="1"/>
</dbReference>
<dbReference type="SUPFAM" id="SSF48239">
    <property type="entry name" value="Terpenoid cyclases/Protein prenyltransferases"/>
    <property type="match status" value="1"/>
</dbReference>
<dbReference type="SUPFAM" id="SSF48576">
    <property type="entry name" value="Terpenoid synthases"/>
    <property type="match status" value="1"/>
</dbReference>
<gene>
    <name evidence="4" type="primary">TPS-Lonf</name>
</gene>
<organism>
    <name type="scientific">Picea engelmannii x Picea glauca</name>
    <name type="common">Hybrid white spruce</name>
    <dbReference type="NCBI Taxonomy" id="373101"/>
    <lineage>
        <taxon>Eukaryota</taxon>
        <taxon>Viridiplantae</taxon>
        <taxon>Streptophyta</taxon>
        <taxon>Embryophyta</taxon>
        <taxon>Tracheophyta</taxon>
        <taxon>Spermatophyta</taxon>
        <taxon>Pinopsida</taxon>
        <taxon>Pinidae</taxon>
        <taxon>Conifers I</taxon>
        <taxon>Pinales</taxon>
        <taxon>Pinaceae</taxon>
        <taxon>Picea</taxon>
    </lineage>
</organism>
<sequence>MAQISKCSSLSAELNESSIISHHHGNLWADDFIQSLKSSNGAPQYHKRAEKLVEEIKNLVVSEMKDCNDDLIRRLQMVDIFECLGIDRHFQHEIQVALDYVYRYWNELEGIGIGSRDSLIKDFNATALGFRALRLHRYNVSSDVLENFKNENGQFFCSSTVEEKEVRCMLTLFRASEISFPGEKVMDEAKAFTTEYLTKVLTGVDVTDVDQSLLREVKYALEFPWHCSLPRWEARSFIEICGQNDSWLKSIMNKRVLELAKLDFNILQCAHHRELQLLSSWWSQSDIAQQNFYRKRHVEYYLWVVIGTFEPEFSTCRIAFAKIATLMTILDDLYDTHGTLEQLKIFTEGVKRWDLSLVDRLPDYIKITFEFFLNTSNELIAEVAKTQERDMSAYIRKTWERYLEAYLQEAEWIAARHVPTFDEYMKNGISSSGMCILNLYSLLLMGQLLPDDVLEQIHSPSKIHELVELTARLVDDSKDFETKKAGGELASGIECYVKDNPECTLEDASNHLIGLLDLTVKELNWEFVRHDSVALCFKKFAFNVARGLRLIYKYRDGFDVSNQEMKTHIFKILIDPLT</sequence>
<proteinExistence type="evidence at protein level"/>
<comment type="function">
    <text evidence="3">Terpene synthase (TPS) involved in the biosynthesis of sesquiterpene natural products included in conifer oleoresin secretions and volatile emissions; these compounds contribute to biotic and abiotic stress defense against herbivores and pathogens (PubMed:21385377). Catalyzes the conversion of (2E,6E)-farnesyl diphosphate (FPP) to longifolene (PubMed:21385377).</text>
</comment>
<comment type="catalytic activity">
    <reaction evidence="3">
        <text>(2E,6E)-farnesyl diphosphate = longifolene + diphosphate</text>
        <dbReference type="Rhea" id="RHEA:25464"/>
        <dbReference type="ChEBI" id="CHEBI:6530"/>
        <dbReference type="ChEBI" id="CHEBI:33019"/>
        <dbReference type="ChEBI" id="CHEBI:175763"/>
        <dbReference type="EC" id="4.2.3.58"/>
    </reaction>
</comment>
<comment type="cofactor">
    <cofactor evidence="1">
        <name>Mg(2+)</name>
        <dbReference type="ChEBI" id="CHEBI:18420"/>
    </cofactor>
    <cofactor evidence="1">
        <name>Mn(2+)</name>
        <dbReference type="ChEBI" id="CHEBI:29035"/>
    </cofactor>
    <text evidence="1">Binds 3 Mg(2+) or Mn(2+) ions per subunit.</text>
</comment>
<comment type="pathway">
    <text evidence="3">Sesquiterpene biosynthesis.</text>
</comment>
<comment type="pathway">
    <text evidence="3">Terpene metabolism; oleoresin biosynthesis.</text>
</comment>
<comment type="domain">
    <text evidence="1">The Asp-Asp-Xaa-Xaa-Asp/Glu (DDXXD/E) motif is important for the catalytic activity, presumably through binding to Mg(2+).</text>
</comment>
<comment type="similarity">
    <text evidence="5">Belongs to the terpene synthase family. Tpsd subfamily.</text>
</comment>
<accession>F2XFA0</accession>
<feature type="chain" id="PRO_0000454415" description="Longifolene synthase">
    <location>
        <begin position="1"/>
        <end position="578"/>
    </location>
</feature>
<feature type="short sequence motif" description="DDXXD motif" evidence="1">
    <location>
        <begin position="331"/>
        <end position="335"/>
    </location>
</feature>
<feature type="binding site" evidence="2">
    <location>
        <position position="331"/>
    </location>
    <ligand>
        <name>Mg(2+)</name>
        <dbReference type="ChEBI" id="CHEBI:18420"/>
        <label>1</label>
    </ligand>
</feature>
<feature type="binding site" evidence="2">
    <location>
        <position position="331"/>
    </location>
    <ligand>
        <name>Mg(2+)</name>
        <dbReference type="ChEBI" id="CHEBI:18420"/>
        <label>2</label>
    </ligand>
</feature>
<feature type="binding site" evidence="2">
    <location>
        <position position="335"/>
    </location>
    <ligand>
        <name>Mg(2+)</name>
        <dbReference type="ChEBI" id="CHEBI:18420"/>
        <label>1</label>
    </ligand>
</feature>
<feature type="binding site" evidence="2">
    <location>
        <position position="335"/>
    </location>
    <ligand>
        <name>Mg(2+)</name>
        <dbReference type="ChEBI" id="CHEBI:18420"/>
        <label>2</label>
    </ligand>
</feature>
<feature type="binding site" evidence="2">
    <location>
        <position position="475"/>
    </location>
    <ligand>
        <name>Mg(2+)</name>
        <dbReference type="ChEBI" id="CHEBI:18420"/>
        <label>3</label>
    </ligand>
</feature>
<reference key="1">
    <citation type="journal article" date="2011" name="BMC Plant Biol.">
        <title>Transcriptome mining, functional characterization, and phylogeny of a large terpene synthase gene family in spruce (Picea spp.).</title>
        <authorList>
            <person name="Keeling C.I."/>
            <person name="Weisshaar S."/>
            <person name="Ralph S.G."/>
            <person name="Jancsik S."/>
            <person name="Hamberger B."/>
            <person name="Dullat H.K."/>
            <person name="Bohlmann J."/>
        </authorList>
    </citation>
    <scope>NUCLEOTIDE SEQUENCE [MRNA]</scope>
    <scope>CATALYTIC ACTIVITY</scope>
    <scope>FUNCTION</scope>
    <scope>PATHWAY</scope>
    <scope>GENE FAMILY</scope>
    <source>
        <strain>cv. Fa1-1028</strain>
    </source>
</reference>
<name>TPSLS_PICXS</name>
<protein>
    <recommendedName>
        <fullName evidence="4">Longifolene synthase</fullName>
        <ecNumber evidence="3">4.2.3.58</ecNumber>
    </recommendedName>
    <alternativeName>
        <fullName evidence="4">Terpene synthase TPS-Lonf</fullName>
        <shortName evidence="4">PgxeTPS-Lonf</shortName>
    </alternativeName>
</protein>
<evidence type="ECO:0000250" key="1">
    <source>
        <dbReference type="UniProtKB" id="A0A1C9J6A7"/>
    </source>
</evidence>
<evidence type="ECO:0000250" key="2">
    <source>
        <dbReference type="UniProtKB" id="Q40577"/>
    </source>
</evidence>
<evidence type="ECO:0000269" key="3">
    <source>
    </source>
</evidence>
<evidence type="ECO:0000303" key="4">
    <source>
    </source>
</evidence>
<evidence type="ECO:0000305" key="5"/>